<sequence>MSCPVIELTQQLIRRPSLSPDDAGCQALMIERLRAIGFTVERMDFGDTQNFWAWRGQGETLAFAGHTDVVPAGDADRWINPPFEPTIRDGMLFGRGAADMKGSLAAMVVAAERFVAQHPNHKNRLAFLITSDEEASAKNGTVRVVETLMERHERLDYCLVGEPSSTEVVGDVVKNGRRGSLTCNLTIHGVQGHVAYPHLADNPVHRAAPMLNELVNIEWDKGNEFFPPTSMQIANLQAGTGSNNVIPGDFSVQFNFRFSTELTDEMIKSRVVALLEKYELRYSVDWWLSGQPFLTQRGKLVDAVVNAIAHYNEIKPQLLTTGGTSDGRFIARMGAQVVELGPVNATIHKINECVNAADLQLLARMYQRIMEQLVA</sequence>
<comment type="function">
    <text evidence="1">Catalyzes the hydrolysis of N-succinyl-L,L-diaminopimelic acid (SDAP), forming succinate and LL-2,6-diaminopimelate (DAP), an intermediate involved in the bacterial biosynthesis of lysine and meso-diaminopimelic acid, an essential component of bacterial cell walls.</text>
</comment>
<comment type="catalytic activity">
    <reaction evidence="1">
        <text>N-succinyl-(2S,6S)-2,6-diaminopimelate + H2O = (2S,6S)-2,6-diaminopimelate + succinate</text>
        <dbReference type="Rhea" id="RHEA:22608"/>
        <dbReference type="ChEBI" id="CHEBI:15377"/>
        <dbReference type="ChEBI" id="CHEBI:30031"/>
        <dbReference type="ChEBI" id="CHEBI:57609"/>
        <dbReference type="ChEBI" id="CHEBI:58087"/>
        <dbReference type="EC" id="3.5.1.18"/>
    </reaction>
</comment>
<comment type="cofactor">
    <cofactor evidence="1">
        <name>Zn(2+)</name>
        <dbReference type="ChEBI" id="CHEBI:29105"/>
    </cofactor>
    <cofactor evidence="1">
        <name>Co(2+)</name>
        <dbReference type="ChEBI" id="CHEBI:48828"/>
    </cofactor>
    <text evidence="1">Binds 2 Zn(2+) or Co(2+) ions per subunit.</text>
</comment>
<comment type="pathway">
    <text evidence="1">Amino-acid biosynthesis; L-lysine biosynthesis via DAP pathway; LL-2,6-diaminopimelate from (S)-tetrahydrodipicolinate (succinylase route): step 3/3.</text>
</comment>
<comment type="subunit">
    <text evidence="1">Homodimer.</text>
</comment>
<comment type="similarity">
    <text evidence="1">Belongs to the peptidase M20A family. DapE subfamily.</text>
</comment>
<dbReference type="EC" id="3.5.1.18" evidence="1"/>
<dbReference type="EMBL" id="CP000653">
    <property type="protein sequence ID" value="ABP61631.1"/>
    <property type="molecule type" value="Genomic_DNA"/>
</dbReference>
<dbReference type="RefSeq" id="WP_015959963.1">
    <property type="nucleotide sequence ID" value="NC_009436.1"/>
</dbReference>
<dbReference type="SMR" id="A4WD51"/>
<dbReference type="STRING" id="399742.Ent638_2967"/>
<dbReference type="MEROPS" id="M20.010"/>
<dbReference type="KEGG" id="ent:Ent638_2967"/>
<dbReference type="eggNOG" id="COG0624">
    <property type="taxonomic scope" value="Bacteria"/>
</dbReference>
<dbReference type="HOGENOM" id="CLU_021802_4_0_6"/>
<dbReference type="OrthoDB" id="9809784at2"/>
<dbReference type="UniPathway" id="UPA00034">
    <property type="reaction ID" value="UER00021"/>
</dbReference>
<dbReference type="Proteomes" id="UP000000230">
    <property type="component" value="Chromosome"/>
</dbReference>
<dbReference type="GO" id="GO:0008777">
    <property type="term" value="F:acetylornithine deacetylase activity"/>
    <property type="evidence" value="ECO:0007669"/>
    <property type="project" value="TreeGrafter"/>
</dbReference>
<dbReference type="GO" id="GO:0050897">
    <property type="term" value="F:cobalt ion binding"/>
    <property type="evidence" value="ECO:0007669"/>
    <property type="project" value="UniProtKB-UniRule"/>
</dbReference>
<dbReference type="GO" id="GO:0009014">
    <property type="term" value="F:succinyl-diaminopimelate desuccinylase activity"/>
    <property type="evidence" value="ECO:0007669"/>
    <property type="project" value="UniProtKB-UniRule"/>
</dbReference>
<dbReference type="GO" id="GO:0008270">
    <property type="term" value="F:zinc ion binding"/>
    <property type="evidence" value="ECO:0007669"/>
    <property type="project" value="UniProtKB-UniRule"/>
</dbReference>
<dbReference type="GO" id="GO:0019877">
    <property type="term" value="P:diaminopimelate biosynthetic process"/>
    <property type="evidence" value="ECO:0007669"/>
    <property type="project" value="UniProtKB-UniRule"/>
</dbReference>
<dbReference type="GO" id="GO:0006526">
    <property type="term" value="P:L-arginine biosynthetic process"/>
    <property type="evidence" value="ECO:0007669"/>
    <property type="project" value="TreeGrafter"/>
</dbReference>
<dbReference type="GO" id="GO:0009089">
    <property type="term" value="P:lysine biosynthetic process via diaminopimelate"/>
    <property type="evidence" value="ECO:0007669"/>
    <property type="project" value="UniProtKB-UniRule"/>
</dbReference>
<dbReference type="CDD" id="cd03891">
    <property type="entry name" value="M20_DapE_proteobac"/>
    <property type="match status" value="1"/>
</dbReference>
<dbReference type="FunFam" id="3.30.70.360:FF:000011">
    <property type="entry name" value="Succinyl-diaminopimelate desuccinylase"/>
    <property type="match status" value="1"/>
</dbReference>
<dbReference type="FunFam" id="3.40.630.10:FF:000005">
    <property type="entry name" value="Succinyl-diaminopimelate desuccinylase"/>
    <property type="match status" value="1"/>
</dbReference>
<dbReference type="FunFam" id="3.40.630.10:FF:000010">
    <property type="entry name" value="Succinyl-diaminopimelate desuccinylase"/>
    <property type="match status" value="1"/>
</dbReference>
<dbReference type="Gene3D" id="3.40.630.10">
    <property type="entry name" value="Zn peptidases"/>
    <property type="match status" value="2"/>
</dbReference>
<dbReference type="HAMAP" id="MF_01690">
    <property type="entry name" value="DapE"/>
    <property type="match status" value="1"/>
</dbReference>
<dbReference type="InterPro" id="IPR001261">
    <property type="entry name" value="ArgE/DapE_CS"/>
</dbReference>
<dbReference type="InterPro" id="IPR036264">
    <property type="entry name" value="Bact_exopeptidase_dim_dom"/>
</dbReference>
<dbReference type="InterPro" id="IPR005941">
    <property type="entry name" value="DapE_proteobac"/>
</dbReference>
<dbReference type="InterPro" id="IPR002933">
    <property type="entry name" value="Peptidase_M20"/>
</dbReference>
<dbReference type="InterPro" id="IPR011650">
    <property type="entry name" value="Peptidase_M20_dimer"/>
</dbReference>
<dbReference type="InterPro" id="IPR050072">
    <property type="entry name" value="Peptidase_M20A"/>
</dbReference>
<dbReference type="NCBIfam" id="TIGR01246">
    <property type="entry name" value="dapE_proteo"/>
    <property type="match status" value="1"/>
</dbReference>
<dbReference type="NCBIfam" id="NF009557">
    <property type="entry name" value="PRK13009.1"/>
    <property type="match status" value="1"/>
</dbReference>
<dbReference type="PANTHER" id="PTHR43808">
    <property type="entry name" value="ACETYLORNITHINE DEACETYLASE"/>
    <property type="match status" value="1"/>
</dbReference>
<dbReference type="PANTHER" id="PTHR43808:SF31">
    <property type="entry name" value="N-ACETYL-L-CITRULLINE DEACETYLASE"/>
    <property type="match status" value="1"/>
</dbReference>
<dbReference type="Pfam" id="PF07687">
    <property type="entry name" value="M20_dimer"/>
    <property type="match status" value="1"/>
</dbReference>
<dbReference type="Pfam" id="PF01546">
    <property type="entry name" value="Peptidase_M20"/>
    <property type="match status" value="1"/>
</dbReference>
<dbReference type="SUPFAM" id="SSF55031">
    <property type="entry name" value="Bacterial exopeptidase dimerisation domain"/>
    <property type="match status" value="1"/>
</dbReference>
<dbReference type="SUPFAM" id="SSF53187">
    <property type="entry name" value="Zn-dependent exopeptidases"/>
    <property type="match status" value="1"/>
</dbReference>
<dbReference type="PROSITE" id="PS00758">
    <property type="entry name" value="ARGE_DAPE_CPG2_1"/>
    <property type="match status" value="1"/>
</dbReference>
<dbReference type="PROSITE" id="PS00759">
    <property type="entry name" value="ARGE_DAPE_CPG2_2"/>
    <property type="match status" value="1"/>
</dbReference>
<evidence type="ECO:0000255" key="1">
    <source>
        <dbReference type="HAMAP-Rule" id="MF_01690"/>
    </source>
</evidence>
<protein>
    <recommendedName>
        <fullName evidence="1">Succinyl-diaminopimelate desuccinylase</fullName>
        <shortName evidence="1">SDAP desuccinylase</shortName>
        <ecNumber evidence="1">3.5.1.18</ecNumber>
    </recommendedName>
    <alternativeName>
        <fullName evidence="1">N-succinyl-LL-2,6-diaminoheptanedioate amidohydrolase</fullName>
    </alternativeName>
</protein>
<reference key="1">
    <citation type="journal article" date="2010" name="PLoS Genet.">
        <title>Genome sequence of the plant growth promoting endophytic bacterium Enterobacter sp. 638.</title>
        <authorList>
            <person name="Taghavi S."/>
            <person name="van der Lelie D."/>
            <person name="Hoffman A."/>
            <person name="Zhang Y.B."/>
            <person name="Walla M.D."/>
            <person name="Vangronsveld J."/>
            <person name="Newman L."/>
            <person name="Monchy S."/>
        </authorList>
    </citation>
    <scope>NUCLEOTIDE SEQUENCE [LARGE SCALE GENOMIC DNA]</scope>
    <source>
        <strain>638</strain>
    </source>
</reference>
<feature type="chain" id="PRO_0000375549" description="Succinyl-diaminopimelate desuccinylase">
    <location>
        <begin position="1"/>
        <end position="375"/>
    </location>
</feature>
<feature type="active site" evidence="1">
    <location>
        <position position="68"/>
    </location>
</feature>
<feature type="active site" description="Proton acceptor" evidence="1">
    <location>
        <position position="133"/>
    </location>
</feature>
<feature type="binding site" evidence="1">
    <location>
        <position position="66"/>
    </location>
    <ligand>
        <name>Zn(2+)</name>
        <dbReference type="ChEBI" id="CHEBI:29105"/>
        <label>1</label>
    </ligand>
</feature>
<feature type="binding site" evidence="1">
    <location>
        <position position="99"/>
    </location>
    <ligand>
        <name>Zn(2+)</name>
        <dbReference type="ChEBI" id="CHEBI:29105"/>
        <label>1</label>
    </ligand>
</feature>
<feature type="binding site" evidence="1">
    <location>
        <position position="99"/>
    </location>
    <ligand>
        <name>Zn(2+)</name>
        <dbReference type="ChEBI" id="CHEBI:29105"/>
        <label>2</label>
    </ligand>
</feature>
<feature type="binding site" evidence="1">
    <location>
        <position position="134"/>
    </location>
    <ligand>
        <name>Zn(2+)</name>
        <dbReference type="ChEBI" id="CHEBI:29105"/>
        <label>2</label>
    </ligand>
</feature>
<feature type="binding site" evidence="1">
    <location>
        <position position="162"/>
    </location>
    <ligand>
        <name>Zn(2+)</name>
        <dbReference type="ChEBI" id="CHEBI:29105"/>
        <label>1</label>
    </ligand>
</feature>
<feature type="binding site" evidence="1">
    <location>
        <position position="348"/>
    </location>
    <ligand>
        <name>Zn(2+)</name>
        <dbReference type="ChEBI" id="CHEBI:29105"/>
        <label>2</label>
    </ligand>
</feature>
<keyword id="KW-0028">Amino-acid biosynthesis</keyword>
<keyword id="KW-0170">Cobalt</keyword>
<keyword id="KW-0220">Diaminopimelate biosynthesis</keyword>
<keyword id="KW-0378">Hydrolase</keyword>
<keyword id="KW-0457">Lysine biosynthesis</keyword>
<keyword id="KW-0479">Metal-binding</keyword>
<keyword id="KW-0862">Zinc</keyword>
<proteinExistence type="inferred from homology"/>
<organism>
    <name type="scientific">Enterobacter sp. (strain 638)</name>
    <dbReference type="NCBI Taxonomy" id="399742"/>
    <lineage>
        <taxon>Bacteria</taxon>
        <taxon>Pseudomonadati</taxon>
        <taxon>Pseudomonadota</taxon>
        <taxon>Gammaproteobacteria</taxon>
        <taxon>Enterobacterales</taxon>
        <taxon>Enterobacteriaceae</taxon>
        <taxon>Enterobacter</taxon>
    </lineage>
</organism>
<accession>A4WD51</accession>
<gene>
    <name evidence="1" type="primary">dapE</name>
    <name type="ordered locus">Ent638_2967</name>
</gene>
<name>DAPE_ENT38</name>